<gene>
    <name evidence="1" type="primary">guaA</name>
    <name type="ordered locus">EcHS_A2658</name>
</gene>
<name>GUAA_ECOHS</name>
<dbReference type="EC" id="6.3.5.2" evidence="1"/>
<dbReference type="EMBL" id="CP000802">
    <property type="protein sequence ID" value="ABV06917.1"/>
    <property type="molecule type" value="Genomic_DNA"/>
</dbReference>
<dbReference type="RefSeq" id="WP_000138282.1">
    <property type="nucleotide sequence ID" value="NC_009800.1"/>
</dbReference>
<dbReference type="SMR" id="A8A313"/>
<dbReference type="MEROPS" id="C26.957"/>
<dbReference type="GeneID" id="75172615"/>
<dbReference type="KEGG" id="ecx:EcHS_A2658"/>
<dbReference type="HOGENOM" id="CLU_014340_0_5_6"/>
<dbReference type="UniPathway" id="UPA00189">
    <property type="reaction ID" value="UER00296"/>
</dbReference>
<dbReference type="GO" id="GO:0005829">
    <property type="term" value="C:cytosol"/>
    <property type="evidence" value="ECO:0007669"/>
    <property type="project" value="TreeGrafter"/>
</dbReference>
<dbReference type="GO" id="GO:0005524">
    <property type="term" value="F:ATP binding"/>
    <property type="evidence" value="ECO:0007669"/>
    <property type="project" value="UniProtKB-UniRule"/>
</dbReference>
<dbReference type="GO" id="GO:0003921">
    <property type="term" value="F:GMP synthase activity"/>
    <property type="evidence" value="ECO:0007669"/>
    <property type="project" value="InterPro"/>
</dbReference>
<dbReference type="CDD" id="cd01742">
    <property type="entry name" value="GATase1_GMP_Synthase"/>
    <property type="match status" value="1"/>
</dbReference>
<dbReference type="CDD" id="cd01997">
    <property type="entry name" value="GMP_synthase_C"/>
    <property type="match status" value="1"/>
</dbReference>
<dbReference type="FunFam" id="3.30.300.10:FF:000002">
    <property type="entry name" value="GMP synthase [glutamine-hydrolyzing]"/>
    <property type="match status" value="1"/>
</dbReference>
<dbReference type="FunFam" id="3.40.50.620:FF:000001">
    <property type="entry name" value="GMP synthase [glutamine-hydrolyzing]"/>
    <property type="match status" value="1"/>
</dbReference>
<dbReference type="FunFam" id="3.40.50.880:FF:000001">
    <property type="entry name" value="GMP synthase [glutamine-hydrolyzing]"/>
    <property type="match status" value="1"/>
</dbReference>
<dbReference type="Gene3D" id="3.30.300.10">
    <property type="match status" value="1"/>
</dbReference>
<dbReference type="Gene3D" id="3.40.50.880">
    <property type="match status" value="1"/>
</dbReference>
<dbReference type="Gene3D" id="3.40.50.620">
    <property type="entry name" value="HUPs"/>
    <property type="match status" value="1"/>
</dbReference>
<dbReference type="HAMAP" id="MF_00344">
    <property type="entry name" value="GMP_synthase"/>
    <property type="match status" value="1"/>
</dbReference>
<dbReference type="InterPro" id="IPR029062">
    <property type="entry name" value="Class_I_gatase-like"/>
</dbReference>
<dbReference type="InterPro" id="IPR017926">
    <property type="entry name" value="GATASE"/>
</dbReference>
<dbReference type="InterPro" id="IPR001674">
    <property type="entry name" value="GMP_synth_C"/>
</dbReference>
<dbReference type="InterPro" id="IPR004739">
    <property type="entry name" value="GMP_synth_GATase"/>
</dbReference>
<dbReference type="InterPro" id="IPR022955">
    <property type="entry name" value="GMP_synthase"/>
</dbReference>
<dbReference type="InterPro" id="IPR025777">
    <property type="entry name" value="GMPS_ATP_PPase_dom"/>
</dbReference>
<dbReference type="InterPro" id="IPR022310">
    <property type="entry name" value="NAD/GMP_synthase"/>
</dbReference>
<dbReference type="InterPro" id="IPR014729">
    <property type="entry name" value="Rossmann-like_a/b/a_fold"/>
</dbReference>
<dbReference type="NCBIfam" id="TIGR00884">
    <property type="entry name" value="guaA_Cterm"/>
    <property type="match status" value="1"/>
</dbReference>
<dbReference type="NCBIfam" id="TIGR00888">
    <property type="entry name" value="guaA_Nterm"/>
    <property type="match status" value="1"/>
</dbReference>
<dbReference type="NCBIfam" id="NF000848">
    <property type="entry name" value="PRK00074.1"/>
    <property type="match status" value="1"/>
</dbReference>
<dbReference type="PANTHER" id="PTHR11922:SF2">
    <property type="entry name" value="GMP SYNTHASE [GLUTAMINE-HYDROLYZING]"/>
    <property type="match status" value="1"/>
</dbReference>
<dbReference type="PANTHER" id="PTHR11922">
    <property type="entry name" value="GMP SYNTHASE-RELATED"/>
    <property type="match status" value="1"/>
</dbReference>
<dbReference type="Pfam" id="PF00117">
    <property type="entry name" value="GATase"/>
    <property type="match status" value="1"/>
</dbReference>
<dbReference type="Pfam" id="PF00958">
    <property type="entry name" value="GMP_synt_C"/>
    <property type="match status" value="1"/>
</dbReference>
<dbReference type="Pfam" id="PF02540">
    <property type="entry name" value="NAD_synthase"/>
    <property type="match status" value="1"/>
</dbReference>
<dbReference type="PRINTS" id="PR00097">
    <property type="entry name" value="ANTSNTHASEII"/>
</dbReference>
<dbReference type="PRINTS" id="PR00099">
    <property type="entry name" value="CPSGATASE"/>
</dbReference>
<dbReference type="PRINTS" id="PR00096">
    <property type="entry name" value="GATASE"/>
</dbReference>
<dbReference type="SUPFAM" id="SSF52402">
    <property type="entry name" value="Adenine nucleotide alpha hydrolases-like"/>
    <property type="match status" value="1"/>
</dbReference>
<dbReference type="SUPFAM" id="SSF52317">
    <property type="entry name" value="Class I glutamine amidotransferase-like"/>
    <property type="match status" value="1"/>
</dbReference>
<dbReference type="SUPFAM" id="SSF54810">
    <property type="entry name" value="GMP synthetase C-terminal dimerisation domain"/>
    <property type="match status" value="1"/>
</dbReference>
<dbReference type="PROSITE" id="PS51273">
    <property type="entry name" value="GATASE_TYPE_1"/>
    <property type="match status" value="1"/>
</dbReference>
<dbReference type="PROSITE" id="PS51553">
    <property type="entry name" value="GMPS_ATP_PPASE"/>
    <property type="match status" value="1"/>
</dbReference>
<protein>
    <recommendedName>
        <fullName evidence="1">GMP synthase [glutamine-hydrolyzing]</fullName>
        <ecNumber evidence="1">6.3.5.2</ecNumber>
    </recommendedName>
    <alternativeName>
        <fullName evidence="1">GMP synthetase</fullName>
    </alternativeName>
    <alternativeName>
        <fullName evidence="1">Glutamine amidotransferase</fullName>
    </alternativeName>
</protein>
<keyword id="KW-0067">ATP-binding</keyword>
<keyword id="KW-0315">Glutamine amidotransferase</keyword>
<keyword id="KW-0332">GMP biosynthesis</keyword>
<keyword id="KW-0436">Ligase</keyword>
<keyword id="KW-0547">Nucleotide-binding</keyword>
<keyword id="KW-0658">Purine biosynthesis</keyword>
<sequence>MTENIHKHRILILDFGSQYTQLVARRVRELGVYCELWAWDVTEAQIRDFNPSGIILSGGPESTTEENSPRAPQYVFEAGVPVFGVCYGMQTMAMQLGGHVEASNEREFGYAQVEVVNDSALVRGIEDALTADGKPLLDVWMSHGDKVTAIPSDFVTVASTESCPFAIMANEEKRFYGVQFHPEVTHTRQGMRMLERFVRDICQCEALWTPAKIIDDAVARIREQVGDDKVILGLSGGVDSSVTAMLLHRAIGKNLTCVFVDNGLLRLNEAEQVLDMFGDHFGLNIVHVPAEDRFLSALAGENDPEAKRKIIGRVFVEVFDEEALKLEDVKWLAQGTIYPDVIESAASATGKAHVIKSHHNVGGLPKEMKMGLVEPLKELFKDEVRKIGLELGLPYDMLYRHPFPGPGLGVRVLGEVKKEYCDLLRRADAIFIEELRKADLYDKVSQAFTVFLPVRSVGVMGDGRKYDWVVSLRAVETIDFMTAHWAHLPYDFLGRVSNRIINEVNGISRVVYDISGKPPATIEWE</sequence>
<reference key="1">
    <citation type="journal article" date="2008" name="J. Bacteriol.">
        <title>The pangenome structure of Escherichia coli: comparative genomic analysis of E. coli commensal and pathogenic isolates.</title>
        <authorList>
            <person name="Rasko D.A."/>
            <person name="Rosovitz M.J."/>
            <person name="Myers G.S.A."/>
            <person name="Mongodin E.F."/>
            <person name="Fricke W.F."/>
            <person name="Gajer P."/>
            <person name="Crabtree J."/>
            <person name="Sebaihia M."/>
            <person name="Thomson N.R."/>
            <person name="Chaudhuri R."/>
            <person name="Henderson I.R."/>
            <person name="Sperandio V."/>
            <person name="Ravel J."/>
        </authorList>
    </citation>
    <scope>NUCLEOTIDE SEQUENCE [LARGE SCALE GENOMIC DNA]</scope>
    <source>
        <strain>HS</strain>
    </source>
</reference>
<proteinExistence type="inferred from homology"/>
<evidence type="ECO:0000255" key="1">
    <source>
        <dbReference type="HAMAP-Rule" id="MF_00344"/>
    </source>
</evidence>
<organism>
    <name type="scientific">Escherichia coli O9:H4 (strain HS)</name>
    <dbReference type="NCBI Taxonomy" id="331112"/>
    <lineage>
        <taxon>Bacteria</taxon>
        <taxon>Pseudomonadati</taxon>
        <taxon>Pseudomonadota</taxon>
        <taxon>Gammaproteobacteria</taxon>
        <taxon>Enterobacterales</taxon>
        <taxon>Enterobacteriaceae</taxon>
        <taxon>Escherichia</taxon>
    </lineage>
</organism>
<comment type="function">
    <text evidence="1">Catalyzes the synthesis of GMP from XMP.</text>
</comment>
<comment type="catalytic activity">
    <reaction evidence="1">
        <text>XMP + L-glutamine + ATP + H2O = GMP + L-glutamate + AMP + diphosphate + 2 H(+)</text>
        <dbReference type="Rhea" id="RHEA:11680"/>
        <dbReference type="ChEBI" id="CHEBI:15377"/>
        <dbReference type="ChEBI" id="CHEBI:15378"/>
        <dbReference type="ChEBI" id="CHEBI:29985"/>
        <dbReference type="ChEBI" id="CHEBI:30616"/>
        <dbReference type="ChEBI" id="CHEBI:33019"/>
        <dbReference type="ChEBI" id="CHEBI:57464"/>
        <dbReference type="ChEBI" id="CHEBI:58115"/>
        <dbReference type="ChEBI" id="CHEBI:58359"/>
        <dbReference type="ChEBI" id="CHEBI:456215"/>
        <dbReference type="EC" id="6.3.5.2"/>
    </reaction>
</comment>
<comment type="pathway">
    <text evidence="1">Purine metabolism; GMP biosynthesis; GMP from XMP (L-Gln route): step 1/1.</text>
</comment>
<comment type="subunit">
    <text evidence="1">Homodimer.</text>
</comment>
<feature type="chain" id="PRO_1000120284" description="GMP synthase [glutamine-hydrolyzing]">
    <location>
        <begin position="1"/>
        <end position="525"/>
    </location>
</feature>
<feature type="domain" description="Glutamine amidotransferase type-1" evidence="1">
    <location>
        <begin position="9"/>
        <end position="207"/>
    </location>
</feature>
<feature type="domain" description="GMPS ATP-PPase" evidence="1">
    <location>
        <begin position="208"/>
        <end position="400"/>
    </location>
</feature>
<feature type="active site" description="Nucleophile" evidence="1">
    <location>
        <position position="86"/>
    </location>
</feature>
<feature type="active site" evidence="1">
    <location>
        <position position="181"/>
    </location>
</feature>
<feature type="active site" evidence="1">
    <location>
        <position position="183"/>
    </location>
</feature>
<feature type="binding site" evidence="1">
    <location>
        <begin position="235"/>
        <end position="241"/>
    </location>
    <ligand>
        <name>ATP</name>
        <dbReference type="ChEBI" id="CHEBI:30616"/>
    </ligand>
</feature>
<accession>A8A313</accession>